<evidence type="ECO:0000255" key="1">
    <source>
        <dbReference type="HAMAP-Rule" id="MF_00739"/>
    </source>
</evidence>
<evidence type="ECO:0007829" key="2">
    <source>
        <dbReference type="PDB" id="8HCN"/>
    </source>
</evidence>
<feature type="chain" id="PRO_0000098016" description="Urease subunit gamma">
    <location>
        <begin position="1"/>
        <end position="100"/>
    </location>
</feature>
<feature type="helix" evidence="2">
    <location>
        <begin position="5"/>
        <end position="26"/>
    </location>
</feature>
<feature type="helix" evidence="2">
    <location>
        <begin position="32"/>
        <end position="49"/>
    </location>
</feature>
<feature type="helix" evidence="2">
    <location>
        <begin position="53"/>
        <end position="59"/>
    </location>
</feature>
<feature type="helix" evidence="2">
    <location>
        <begin position="60"/>
        <end position="62"/>
    </location>
</feature>
<feature type="strand" evidence="2">
    <location>
        <begin position="63"/>
        <end position="65"/>
    </location>
</feature>
<feature type="helix" evidence="2">
    <location>
        <begin position="66"/>
        <end position="68"/>
    </location>
</feature>
<feature type="helix" evidence="2">
    <location>
        <begin position="73"/>
        <end position="76"/>
    </location>
</feature>
<feature type="strand" evidence="2">
    <location>
        <begin position="78"/>
        <end position="86"/>
    </location>
</feature>
<feature type="strand" evidence="2">
    <location>
        <begin position="89"/>
        <end position="97"/>
    </location>
</feature>
<comment type="catalytic activity">
    <reaction evidence="1">
        <text>urea + 2 H2O + H(+) = hydrogencarbonate + 2 NH4(+)</text>
        <dbReference type="Rhea" id="RHEA:20557"/>
        <dbReference type="ChEBI" id="CHEBI:15377"/>
        <dbReference type="ChEBI" id="CHEBI:15378"/>
        <dbReference type="ChEBI" id="CHEBI:16199"/>
        <dbReference type="ChEBI" id="CHEBI:17544"/>
        <dbReference type="ChEBI" id="CHEBI:28938"/>
        <dbReference type="EC" id="3.5.1.5"/>
    </reaction>
</comment>
<comment type="pathway">
    <text evidence="1">Nitrogen metabolism; urea degradation; CO(2) and NH(3) from urea (urease route): step 1/1.</text>
</comment>
<comment type="subunit">
    <text evidence="1">Heterotrimer of UreA (gamma), UreB (beta) and UreC (alpha) subunits. Three heterotrimers associate to form the active enzyme.</text>
</comment>
<comment type="subcellular location">
    <subcellularLocation>
        <location evidence="1">Cytoplasm</location>
    </subcellularLocation>
</comment>
<comment type="similarity">
    <text evidence="1">Belongs to the urease gamma subunit family.</text>
</comment>
<protein>
    <recommendedName>
        <fullName evidence="1">Urease subunit gamma</fullName>
        <ecNumber evidence="1">3.5.1.5</ecNumber>
    </recommendedName>
    <alternativeName>
        <fullName evidence="1">Urea amidohydrolase subunit gamma</fullName>
    </alternativeName>
</protein>
<reference key="1">
    <citation type="journal article" date="1993" name="Mol. Microbiol.">
        <title>Identification of a nitrogen-regulated promoter controlling expression of Klebsiella pneumoniae urease genes.</title>
        <authorList>
            <person name="Collins C.M."/>
            <person name="Gutman D.M."/>
            <person name="Laman H."/>
        </authorList>
    </citation>
    <scope>NUCLEOTIDE SEQUENCE [GENOMIC DNA]</scope>
</reference>
<keyword id="KW-0002">3D-structure</keyword>
<keyword id="KW-0963">Cytoplasm</keyword>
<keyword id="KW-0378">Hydrolase</keyword>
<gene>
    <name evidence="1" type="primary">ureA</name>
</gene>
<proteinExistence type="evidence at protein level"/>
<accession>Q02943</accession>
<dbReference type="EC" id="3.5.1.5" evidence="1"/>
<dbReference type="EMBL" id="L07039">
    <property type="protein sequence ID" value="AAA25147.1"/>
    <property type="molecule type" value="Genomic_DNA"/>
</dbReference>
<dbReference type="RefSeq" id="WP_129765606.1">
    <property type="nucleotide sequence ID" value="NZ_JAAQON010000005.1"/>
</dbReference>
<dbReference type="PDB" id="8HCN">
    <property type="method" value="EM"/>
    <property type="resolution" value="2.70 A"/>
    <property type="chains" value="A/E/I=1-100"/>
</dbReference>
<dbReference type="PDBsum" id="8HCN"/>
<dbReference type="SMR" id="Q02943"/>
<dbReference type="UniPathway" id="UPA00258">
    <property type="reaction ID" value="UER00370"/>
</dbReference>
<dbReference type="GO" id="GO:0005737">
    <property type="term" value="C:cytoplasm"/>
    <property type="evidence" value="ECO:0007669"/>
    <property type="project" value="UniProtKB-SubCell"/>
</dbReference>
<dbReference type="GO" id="GO:0016151">
    <property type="term" value="F:nickel cation binding"/>
    <property type="evidence" value="ECO:0007669"/>
    <property type="project" value="InterPro"/>
</dbReference>
<dbReference type="GO" id="GO:0009039">
    <property type="term" value="F:urease activity"/>
    <property type="evidence" value="ECO:0007669"/>
    <property type="project" value="UniProtKB-UniRule"/>
</dbReference>
<dbReference type="GO" id="GO:0043419">
    <property type="term" value="P:urea catabolic process"/>
    <property type="evidence" value="ECO:0007669"/>
    <property type="project" value="UniProtKB-UniRule"/>
</dbReference>
<dbReference type="CDD" id="cd00390">
    <property type="entry name" value="Urease_gamma"/>
    <property type="match status" value="1"/>
</dbReference>
<dbReference type="Gene3D" id="3.30.280.10">
    <property type="entry name" value="Urease, gamma-like subunit"/>
    <property type="match status" value="1"/>
</dbReference>
<dbReference type="HAMAP" id="MF_00739">
    <property type="entry name" value="Urease_gamma"/>
    <property type="match status" value="1"/>
</dbReference>
<dbReference type="InterPro" id="IPR012010">
    <property type="entry name" value="Urease_gamma"/>
</dbReference>
<dbReference type="InterPro" id="IPR002026">
    <property type="entry name" value="Urease_gamma/gamma-beta_su"/>
</dbReference>
<dbReference type="InterPro" id="IPR036463">
    <property type="entry name" value="Urease_gamma_sf"/>
</dbReference>
<dbReference type="InterPro" id="IPR050069">
    <property type="entry name" value="Urease_subunit"/>
</dbReference>
<dbReference type="NCBIfam" id="NF009712">
    <property type="entry name" value="PRK13241.1"/>
    <property type="match status" value="1"/>
</dbReference>
<dbReference type="NCBIfam" id="TIGR00193">
    <property type="entry name" value="urease_gam"/>
    <property type="match status" value="1"/>
</dbReference>
<dbReference type="PANTHER" id="PTHR33569">
    <property type="entry name" value="UREASE"/>
    <property type="match status" value="1"/>
</dbReference>
<dbReference type="PANTHER" id="PTHR33569:SF1">
    <property type="entry name" value="UREASE"/>
    <property type="match status" value="1"/>
</dbReference>
<dbReference type="Pfam" id="PF00547">
    <property type="entry name" value="Urease_gamma"/>
    <property type="match status" value="1"/>
</dbReference>
<dbReference type="PIRSF" id="PIRSF001223">
    <property type="entry name" value="Urease_gamma"/>
    <property type="match status" value="1"/>
</dbReference>
<dbReference type="SUPFAM" id="SSF54111">
    <property type="entry name" value="Urease, gamma-subunit"/>
    <property type="match status" value="1"/>
</dbReference>
<name>URE3_KLEPN</name>
<organism>
    <name type="scientific">Klebsiella pneumoniae</name>
    <dbReference type="NCBI Taxonomy" id="573"/>
    <lineage>
        <taxon>Bacteria</taxon>
        <taxon>Pseudomonadati</taxon>
        <taxon>Pseudomonadota</taxon>
        <taxon>Gammaproteobacteria</taxon>
        <taxon>Enterobacterales</taxon>
        <taxon>Enterobacteriaceae</taxon>
        <taxon>Klebsiella/Raoultella group</taxon>
        <taxon>Klebsiella</taxon>
        <taxon>Klebsiella pneumoniae complex</taxon>
    </lineage>
</organism>
<sequence>MELTPREKDKLLLFTAALVAERRLARGLKLNYPESVALISAFIMEGARDGKSVASLMEEGRHVLTRKQVMEGVPEMIPDIQVEATFPDGSKLVTVHNPII</sequence>